<keyword id="KW-0150">Chloroplast</keyword>
<keyword id="KW-0472">Membrane</keyword>
<keyword id="KW-0602">Photosynthesis</keyword>
<keyword id="KW-0604">Photosystem II</keyword>
<keyword id="KW-0934">Plastid</keyword>
<keyword id="KW-0674">Reaction center</keyword>
<keyword id="KW-0793">Thylakoid</keyword>
<keyword id="KW-0812">Transmembrane</keyword>
<keyword id="KW-1133">Transmembrane helix</keyword>
<dbReference type="EMBL" id="DQ886273">
    <property type="protein sequence ID" value="ABH88101.1"/>
    <property type="molecule type" value="Genomic_DNA"/>
</dbReference>
<dbReference type="EMBL" id="EU196765">
    <property type="protein sequence ID" value="ABW22768.1"/>
    <property type="molecule type" value="Genomic_DNA"/>
</dbReference>
<dbReference type="RefSeq" id="YP_001122821.1">
    <property type="nucleotide sequence ID" value="NC_009259.1"/>
</dbReference>
<dbReference type="SMR" id="A4GGC0"/>
<dbReference type="GeneID" id="4961777"/>
<dbReference type="KEGG" id="pvu:4961777"/>
<dbReference type="GO" id="GO:0009535">
    <property type="term" value="C:chloroplast thylakoid membrane"/>
    <property type="evidence" value="ECO:0007669"/>
    <property type="project" value="UniProtKB-SubCell"/>
</dbReference>
<dbReference type="GO" id="GO:0009539">
    <property type="term" value="C:photosystem II reaction center"/>
    <property type="evidence" value="ECO:0007669"/>
    <property type="project" value="InterPro"/>
</dbReference>
<dbReference type="GO" id="GO:0015979">
    <property type="term" value="P:photosynthesis"/>
    <property type="evidence" value="ECO:0007669"/>
    <property type="project" value="UniProtKB-UniRule"/>
</dbReference>
<dbReference type="Gene3D" id="6.10.250.2070">
    <property type="match status" value="1"/>
</dbReference>
<dbReference type="HAMAP" id="MF_01305">
    <property type="entry name" value="PSII_PsbJ"/>
    <property type="match status" value="1"/>
</dbReference>
<dbReference type="InterPro" id="IPR002682">
    <property type="entry name" value="PSII_PsbJ"/>
</dbReference>
<dbReference type="InterPro" id="IPR037267">
    <property type="entry name" value="PSII_PsbJ_sf"/>
</dbReference>
<dbReference type="NCBIfam" id="NF002722">
    <property type="entry name" value="PRK02565.1"/>
    <property type="match status" value="1"/>
</dbReference>
<dbReference type="PANTHER" id="PTHR34812">
    <property type="entry name" value="PHOTOSYSTEM II REACTION CENTER PROTEIN J"/>
    <property type="match status" value="1"/>
</dbReference>
<dbReference type="PANTHER" id="PTHR34812:SF3">
    <property type="entry name" value="PHOTOSYSTEM II REACTION CENTER PROTEIN J"/>
    <property type="match status" value="1"/>
</dbReference>
<dbReference type="Pfam" id="PF01788">
    <property type="entry name" value="PsbJ"/>
    <property type="match status" value="1"/>
</dbReference>
<dbReference type="SUPFAM" id="SSF161021">
    <property type="entry name" value="Photosystem II reaction center protein J, PsbJ"/>
    <property type="match status" value="1"/>
</dbReference>
<evidence type="ECO:0000255" key="1">
    <source>
        <dbReference type="HAMAP-Rule" id="MF_01305"/>
    </source>
</evidence>
<name>PSBJ_PHAVU</name>
<proteinExistence type="inferred from homology"/>
<protein>
    <recommendedName>
        <fullName evidence="1">Photosystem II reaction center protein J</fullName>
        <shortName evidence="1">PSII-J</shortName>
    </recommendedName>
</protein>
<geneLocation type="chloroplast"/>
<gene>
    <name evidence="1" type="primary">psbJ</name>
</gene>
<feature type="chain" id="PRO_0000292258" description="Photosystem II reaction center protein J">
    <location>
        <begin position="1"/>
        <end position="40"/>
    </location>
</feature>
<feature type="transmembrane region" description="Helical" evidence="1">
    <location>
        <begin position="8"/>
        <end position="28"/>
    </location>
</feature>
<organism>
    <name type="scientific">Phaseolus vulgaris</name>
    <name type="common">Kidney bean</name>
    <name type="synonym">French bean</name>
    <dbReference type="NCBI Taxonomy" id="3885"/>
    <lineage>
        <taxon>Eukaryota</taxon>
        <taxon>Viridiplantae</taxon>
        <taxon>Streptophyta</taxon>
        <taxon>Embryophyta</taxon>
        <taxon>Tracheophyta</taxon>
        <taxon>Spermatophyta</taxon>
        <taxon>Magnoliopsida</taxon>
        <taxon>eudicotyledons</taxon>
        <taxon>Gunneridae</taxon>
        <taxon>Pentapetalae</taxon>
        <taxon>rosids</taxon>
        <taxon>fabids</taxon>
        <taxon>Fabales</taxon>
        <taxon>Fabaceae</taxon>
        <taxon>Papilionoideae</taxon>
        <taxon>50 kb inversion clade</taxon>
        <taxon>NPAAA clade</taxon>
        <taxon>indigoferoid/millettioid clade</taxon>
        <taxon>Phaseoleae</taxon>
        <taxon>Phaseolus</taxon>
    </lineage>
</organism>
<reference key="1">
    <citation type="journal article" date="2007" name="BMC Genomics">
        <title>Rapid evolutionary change of common bean (Phaseolus vulgaris L) plastome, and the genomic diversification of legume chloroplasts.</title>
        <authorList>
            <person name="Guo X."/>
            <person name="Castillo-Ramirez S."/>
            <person name="Gonzalez V."/>
            <person name="Bustos P."/>
            <person name="Fernandez-Vazquez J.L."/>
            <person name="Santamaria R.I."/>
            <person name="Arellano J."/>
            <person name="Cevallos M.A."/>
            <person name="Davila G."/>
        </authorList>
    </citation>
    <scope>NUCLEOTIDE SEQUENCE [LARGE SCALE GENOMIC DNA]</scope>
    <source>
        <strain>cv. Negro Jamapa</strain>
    </source>
</reference>
<reference key="2">
    <citation type="submission" date="2007-10" db="EMBL/GenBank/DDBJ databases">
        <title>Complete nucleotide sequence of the plastid genome of the common bean, Phaseolus vulgaris.</title>
        <authorList>
            <person name="Moore M.J."/>
            <person name="Triplett E.W."/>
            <person name="Broughton W.J."/>
            <person name="Soltis P.S."/>
            <person name="Soltis D.E."/>
        </authorList>
    </citation>
    <scope>NUCLEOTIDE SEQUENCE [LARGE SCALE GENOMIC DNA]</scope>
</reference>
<accession>A4GGC0</accession>
<accession>A8W7Z8</accession>
<comment type="function">
    <text evidence="1">One of the components of the core complex of photosystem II (PSII). PSII is a light-driven water:plastoquinone oxidoreductase that uses light energy to abstract electrons from H(2)O, generating O(2) and a proton gradient subsequently used for ATP formation. It consists of a core antenna complex that captures photons, and an electron transfer chain that converts photonic excitation into a charge separation.</text>
</comment>
<comment type="subunit">
    <text evidence="1">PSII is composed of 1 copy each of membrane proteins PsbA, PsbB, PsbC, PsbD, PsbE, PsbF, PsbH, PsbI, PsbJ, PsbK, PsbL, PsbM, PsbT, PsbX, PsbY, PsbZ, Psb30/Ycf12, at least 3 peripheral proteins of the oxygen-evolving complex and a large number of cofactors. It forms dimeric complexes.</text>
</comment>
<comment type="subcellular location">
    <subcellularLocation>
        <location evidence="1">Plastid</location>
        <location evidence="1">Chloroplast thylakoid membrane</location>
        <topology evidence="1">Single-pass membrane protein</topology>
    </subcellularLocation>
</comment>
<comment type="similarity">
    <text evidence="1">Belongs to the PsbJ family.</text>
</comment>
<sequence length="40" mass="4149">MADTTGRIPLWIIGTVTGITVIGLIGIFFYGSYSGLGSSL</sequence>